<name>RL35_CHRVO</name>
<protein>
    <recommendedName>
        <fullName evidence="1">Large ribosomal subunit protein bL35</fullName>
    </recommendedName>
    <alternativeName>
        <fullName evidence="2">50S ribosomal protein L35</fullName>
    </alternativeName>
</protein>
<proteinExistence type="inferred from homology"/>
<reference key="1">
    <citation type="journal article" date="2003" name="Proc. Natl. Acad. Sci. U.S.A.">
        <title>The complete genome sequence of Chromobacterium violaceum reveals remarkable and exploitable bacterial adaptability.</title>
        <authorList>
            <person name="Vasconcelos A.T.R."/>
            <person name="de Almeida D.F."/>
            <person name="Hungria M."/>
            <person name="Guimaraes C.T."/>
            <person name="Antonio R.V."/>
            <person name="Almeida F.C."/>
            <person name="de Almeida L.G.P."/>
            <person name="de Almeida R."/>
            <person name="Alves-Gomes J.A."/>
            <person name="Andrade E.M."/>
            <person name="Araripe J."/>
            <person name="de Araujo M.F.F."/>
            <person name="Astolfi-Filho S."/>
            <person name="Azevedo V."/>
            <person name="Baptista A.J."/>
            <person name="Bataus L.A.M."/>
            <person name="Batista J.S."/>
            <person name="Belo A."/>
            <person name="van den Berg C."/>
            <person name="Bogo M."/>
            <person name="Bonatto S."/>
            <person name="Bordignon J."/>
            <person name="Brigido M.M."/>
            <person name="Brito C.A."/>
            <person name="Brocchi M."/>
            <person name="Burity H.A."/>
            <person name="Camargo A.A."/>
            <person name="Cardoso D.D.P."/>
            <person name="Carneiro N.P."/>
            <person name="Carraro D.M."/>
            <person name="Carvalho C.M.B."/>
            <person name="Cascardo J.C.M."/>
            <person name="Cavada B.S."/>
            <person name="Chueire L.M.O."/>
            <person name="Creczynski-Pasa T.B."/>
            <person name="Cunha-Junior N.C."/>
            <person name="Fagundes N."/>
            <person name="Falcao C.L."/>
            <person name="Fantinatti F."/>
            <person name="Farias I.P."/>
            <person name="Felipe M.S.S."/>
            <person name="Ferrari L.P."/>
            <person name="Ferro J.A."/>
            <person name="Ferro M.I.T."/>
            <person name="Franco G.R."/>
            <person name="Freitas N.S.A."/>
            <person name="Furlan L.R."/>
            <person name="Gazzinelli R.T."/>
            <person name="Gomes E.A."/>
            <person name="Goncalves P.R."/>
            <person name="Grangeiro T.B."/>
            <person name="Grattapaglia D."/>
            <person name="Grisard E.C."/>
            <person name="Hanna E.S."/>
            <person name="Jardim S.N."/>
            <person name="Laurino J."/>
            <person name="Leoi L.C.T."/>
            <person name="Lima L.F.A."/>
            <person name="Loureiro M.F."/>
            <person name="Lyra M.C.C.P."/>
            <person name="Madeira H.M.F."/>
            <person name="Manfio G.P."/>
            <person name="Maranhao A.Q."/>
            <person name="Martins W.S."/>
            <person name="di Mauro S.M.Z."/>
            <person name="de Medeiros S.R.B."/>
            <person name="Meissner R.V."/>
            <person name="Moreira M.A.M."/>
            <person name="Nascimento F.F."/>
            <person name="Nicolas M.F."/>
            <person name="Oliveira J.G."/>
            <person name="Oliveira S.C."/>
            <person name="Paixao R.F.C."/>
            <person name="Parente J.A."/>
            <person name="Pedrosa F.O."/>
            <person name="Pena S.D.J."/>
            <person name="Pereira J.O."/>
            <person name="Pereira M."/>
            <person name="Pinto L.S.R.C."/>
            <person name="Pinto L.S."/>
            <person name="Porto J.I.R."/>
            <person name="Potrich D.P."/>
            <person name="Ramalho-Neto C.E."/>
            <person name="Reis A.M.M."/>
            <person name="Rigo L.U."/>
            <person name="Rondinelli E."/>
            <person name="Santos E.B.P."/>
            <person name="Santos F.R."/>
            <person name="Schneider M.P.C."/>
            <person name="Seuanez H.N."/>
            <person name="Silva A.M.R."/>
            <person name="da Silva A.L.C."/>
            <person name="Silva D.W."/>
            <person name="Silva R."/>
            <person name="Simoes I.C."/>
            <person name="Simon D."/>
            <person name="Soares C.M.A."/>
            <person name="Soares R.B.A."/>
            <person name="Souza E.M."/>
            <person name="Souza K.R.L."/>
            <person name="Souza R.C."/>
            <person name="Steffens M.B.R."/>
            <person name="Steindel M."/>
            <person name="Teixeira S.R."/>
            <person name="Urmenyi T."/>
            <person name="Vettore A."/>
            <person name="Wassem R."/>
            <person name="Zaha A."/>
            <person name="Simpson A.J.G."/>
        </authorList>
    </citation>
    <scope>NUCLEOTIDE SEQUENCE [LARGE SCALE GENOMIC DNA]</scope>
    <source>
        <strain>ATCC 12472 / DSM 30191 / JCM 1249 / CCUG 213 / NBRC 12614 / NCIMB 9131 / NCTC 9757 / MK</strain>
    </source>
</reference>
<organism>
    <name type="scientific">Chromobacterium violaceum (strain ATCC 12472 / DSM 30191 / JCM 1249 / CCUG 213 / NBRC 12614 / NCIMB 9131 / NCTC 9757 / MK)</name>
    <dbReference type="NCBI Taxonomy" id="243365"/>
    <lineage>
        <taxon>Bacteria</taxon>
        <taxon>Pseudomonadati</taxon>
        <taxon>Pseudomonadota</taxon>
        <taxon>Betaproteobacteria</taxon>
        <taxon>Neisseriales</taxon>
        <taxon>Chromobacteriaceae</taxon>
        <taxon>Chromobacterium</taxon>
    </lineage>
</organism>
<accession>Q7NYC4</accession>
<feature type="chain" id="PRO_0000177350" description="Large ribosomal subunit protein bL35">
    <location>
        <begin position="1"/>
        <end position="65"/>
    </location>
</feature>
<dbReference type="EMBL" id="AE016825">
    <property type="protein sequence ID" value="AAQ59025.1"/>
    <property type="molecule type" value="Genomic_DNA"/>
</dbReference>
<dbReference type="RefSeq" id="WP_011134904.1">
    <property type="nucleotide sequence ID" value="NC_005085.1"/>
</dbReference>
<dbReference type="SMR" id="Q7NYC4"/>
<dbReference type="STRING" id="243365.CV_1350"/>
<dbReference type="GeneID" id="97476628"/>
<dbReference type="KEGG" id="cvi:CV_1350"/>
<dbReference type="eggNOG" id="COG0291">
    <property type="taxonomic scope" value="Bacteria"/>
</dbReference>
<dbReference type="HOGENOM" id="CLU_169643_1_0_4"/>
<dbReference type="OrthoDB" id="47476at2"/>
<dbReference type="Proteomes" id="UP000001424">
    <property type="component" value="Chromosome"/>
</dbReference>
<dbReference type="GO" id="GO:0022625">
    <property type="term" value="C:cytosolic large ribosomal subunit"/>
    <property type="evidence" value="ECO:0007669"/>
    <property type="project" value="TreeGrafter"/>
</dbReference>
<dbReference type="GO" id="GO:0003735">
    <property type="term" value="F:structural constituent of ribosome"/>
    <property type="evidence" value="ECO:0007669"/>
    <property type="project" value="InterPro"/>
</dbReference>
<dbReference type="GO" id="GO:0006412">
    <property type="term" value="P:translation"/>
    <property type="evidence" value="ECO:0007669"/>
    <property type="project" value="UniProtKB-UniRule"/>
</dbReference>
<dbReference type="FunFam" id="4.10.410.60:FF:000001">
    <property type="entry name" value="50S ribosomal protein L35"/>
    <property type="match status" value="1"/>
</dbReference>
<dbReference type="Gene3D" id="4.10.410.60">
    <property type="match status" value="1"/>
</dbReference>
<dbReference type="HAMAP" id="MF_00514">
    <property type="entry name" value="Ribosomal_bL35"/>
    <property type="match status" value="1"/>
</dbReference>
<dbReference type="InterPro" id="IPR001706">
    <property type="entry name" value="Ribosomal_bL35"/>
</dbReference>
<dbReference type="InterPro" id="IPR021137">
    <property type="entry name" value="Ribosomal_bL35-like"/>
</dbReference>
<dbReference type="InterPro" id="IPR037229">
    <property type="entry name" value="Ribosomal_bL35_sf"/>
</dbReference>
<dbReference type="NCBIfam" id="TIGR00001">
    <property type="entry name" value="rpmI_bact"/>
    <property type="match status" value="1"/>
</dbReference>
<dbReference type="PANTHER" id="PTHR33343">
    <property type="entry name" value="54S RIBOSOMAL PROTEIN BL35M"/>
    <property type="match status" value="1"/>
</dbReference>
<dbReference type="PANTHER" id="PTHR33343:SF1">
    <property type="entry name" value="LARGE RIBOSOMAL SUBUNIT PROTEIN BL35M"/>
    <property type="match status" value="1"/>
</dbReference>
<dbReference type="Pfam" id="PF01632">
    <property type="entry name" value="Ribosomal_L35p"/>
    <property type="match status" value="1"/>
</dbReference>
<dbReference type="PRINTS" id="PR00064">
    <property type="entry name" value="RIBOSOMALL35"/>
</dbReference>
<dbReference type="SUPFAM" id="SSF143034">
    <property type="entry name" value="L35p-like"/>
    <property type="match status" value="1"/>
</dbReference>
<comment type="similarity">
    <text evidence="1">Belongs to the bacterial ribosomal protein bL35 family.</text>
</comment>
<gene>
    <name evidence="1" type="primary">rpmI</name>
    <name type="ordered locus">CV_1350</name>
</gene>
<evidence type="ECO:0000255" key="1">
    <source>
        <dbReference type="HAMAP-Rule" id="MF_00514"/>
    </source>
</evidence>
<evidence type="ECO:0000305" key="2"/>
<sequence length="65" mass="7247">MPKMKTKSSAKKRLKVLGGGGFKRAHAFKRHILTKKTTKNKRQLRGTSMVDATNVASVRAMMPYA</sequence>
<keyword id="KW-1185">Reference proteome</keyword>
<keyword id="KW-0687">Ribonucleoprotein</keyword>
<keyword id="KW-0689">Ribosomal protein</keyword>